<protein>
    <recommendedName>
        <fullName>Scarecrow-like protein 6</fullName>
        <shortName>AtSCL6</shortName>
    </recommendedName>
    <alternativeName>
        <fullName>GRAS family protein 22</fullName>
        <shortName>AtGRAS-22</shortName>
    </alternativeName>
    <alternativeName>
        <fullName>SCL6-IV</fullName>
    </alternativeName>
</protein>
<evidence type="ECO:0000250" key="1"/>
<evidence type="ECO:0000255" key="2">
    <source>
        <dbReference type="PROSITE-ProRule" id="PRU01191"/>
    </source>
</evidence>
<evidence type="ECO:0000256" key="3">
    <source>
        <dbReference type="SAM" id="MobiDB-lite"/>
    </source>
</evidence>
<evidence type="ECO:0000269" key="4">
    <source>
    </source>
</evidence>
<evidence type="ECO:0000269" key="5">
    <source>
    </source>
</evidence>
<evidence type="ECO:0000269" key="6">
    <source>
    </source>
</evidence>
<evidence type="ECO:0000305" key="7"/>
<comment type="function">
    <text evidence="1">Probable transcription factor involved in plant development.</text>
</comment>
<comment type="subunit">
    <text evidence="5">Interacts with Meloidogyne incognita 16D10.</text>
</comment>
<comment type="interaction">
    <interactant intactId="EBI-4428591">
        <id>O81316</id>
    </interactant>
    <interactant intactId="EBI-4437350">
        <id>Q9SAK5</id>
        <label>APL</label>
    </interactant>
    <organismsDiffer>false</organismsDiffer>
    <experiments>3</experiments>
</comment>
<comment type="interaction">
    <interactant intactId="EBI-4428591">
        <id>O81316</id>
    </interactant>
    <interactant intactId="EBI-4443730">
        <id>Q8LAJ7</id>
        <label>PHL3</label>
    </interactant>
    <organismsDiffer>false</organismsDiffer>
    <experiments>3</experiments>
</comment>
<comment type="subcellular location">
    <subcellularLocation>
        <location evidence="6">Nucleus</location>
    </subcellularLocation>
</comment>
<comment type="tissue specificity">
    <text evidence="4 6">Expressed in seedlings, roots, leaves, flowers and siliques.</text>
</comment>
<comment type="similarity">
    <text evidence="7">Belongs to the GRAS family.</text>
</comment>
<sequence length="558" mass="61168">MPLPFEEFQGKGISCFSSFSSSFPQPPSSPLLSHRKARGGEEEEEEVPAAEPTSVLDSLISPTSSSTVSSSHGGNSAVGGGGDATTDEQCGAIGLGDWEEQVPHDHEQSILGLIMGDSTDPSLELNSILQTSPTFHDSDYSSPGFGVVDTGFGLDHHSVPPSHVSGLLINQSQTHYTQNPAAIFYGHHHHTPPPAKRLNPGPVGITEQLVKAAEVIESDTCLAQGILARLNQQLSSPVGKPLERAAFYFKEALNNLLHNVSQTLNPYSLIFKIAAYKSFSEISPVLQFANFTSNQALLESFHGFHRLHIIDFDIGYGGQWASLMQELVLRDNAAPLSLKITVFASPANHDQLELGFTQDNLKHFASEINISLDIQVLSLDLLGSISWPNSSEKEAVAVNISAASFSHLPLVLRFVKHLSPTIIVCSDRGCERTDLPFSQQLAHSLHSHTALFESLDAVNANLDAMQKIERFLIQPEIEKLVLDRSRPIERPMMTWQAMFLQMGFSPVTHSNFTESQAECLVQRTPVRGFHVEKKHNSLLLCWQRTELVGVSAWRCRSS</sequence>
<organism>
    <name type="scientific">Arabidopsis thaliana</name>
    <name type="common">Mouse-ear cress</name>
    <dbReference type="NCBI Taxonomy" id="3702"/>
    <lineage>
        <taxon>Eukaryota</taxon>
        <taxon>Viridiplantae</taxon>
        <taxon>Streptophyta</taxon>
        <taxon>Embryophyta</taxon>
        <taxon>Tracheophyta</taxon>
        <taxon>Spermatophyta</taxon>
        <taxon>Magnoliopsida</taxon>
        <taxon>eudicotyledons</taxon>
        <taxon>Gunneridae</taxon>
        <taxon>Pentapetalae</taxon>
        <taxon>rosids</taxon>
        <taxon>malvids</taxon>
        <taxon>Brassicales</taxon>
        <taxon>Brassicaceae</taxon>
        <taxon>Camelineae</taxon>
        <taxon>Arabidopsis</taxon>
    </lineage>
</organism>
<name>SCL6_ARATH</name>
<gene>
    <name type="primary">SCL6</name>
    <name type="ordered locus">At4g00150</name>
    <name type="ORF">F6N15.20</name>
</gene>
<dbReference type="EMBL" id="AF069299">
    <property type="protein sequence ID" value="AAC19296.1"/>
    <property type="molecule type" value="Genomic_DNA"/>
</dbReference>
<dbReference type="EMBL" id="AL161471">
    <property type="protein sequence ID" value="CAB80773.1"/>
    <property type="molecule type" value="Genomic_DNA"/>
</dbReference>
<dbReference type="EMBL" id="CP002687">
    <property type="protein sequence ID" value="AEE81829.1"/>
    <property type="molecule type" value="Genomic_DNA"/>
</dbReference>
<dbReference type="EMBL" id="AF462831">
    <property type="protein sequence ID" value="AAL58919.1"/>
    <property type="molecule type" value="mRNA"/>
</dbReference>
<dbReference type="EMBL" id="AY133537">
    <property type="protein sequence ID" value="AAM91367.1"/>
    <property type="molecule type" value="mRNA"/>
</dbReference>
<dbReference type="EMBL" id="AF036303">
    <property type="protein sequence ID" value="AAD24406.1"/>
    <property type="molecule type" value="mRNA"/>
</dbReference>
<dbReference type="EMBL" id="EU550755">
    <property type="protein sequence ID" value="ACB31517.1"/>
    <property type="molecule type" value="Genomic_DNA"/>
</dbReference>
<dbReference type="EMBL" id="EU550756">
    <property type="protein sequence ID" value="ACB31518.1"/>
    <property type="molecule type" value="Genomic_DNA"/>
</dbReference>
<dbReference type="EMBL" id="EU550757">
    <property type="protein sequence ID" value="ACB31519.1"/>
    <property type="molecule type" value="Genomic_DNA"/>
</dbReference>
<dbReference type="EMBL" id="EU550758">
    <property type="protein sequence ID" value="ACB31520.1"/>
    <property type="molecule type" value="Genomic_DNA"/>
</dbReference>
<dbReference type="EMBL" id="EU550759">
    <property type="protein sequence ID" value="ACB31521.1"/>
    <property type="molecule type" value="Genomic_DNA"/>
</dbReference>
<dbReference type="EMBL" id="EU550760">
    <property type="protein sequence ID" value="ACB31522.1"/>
    <property type="molecule type" value="Genomic_DNA"/>
</dbReference>
<dbReference type="EMBL" id="EU550761">
    <property type="protein sequence ID" value="ACB31523.1"/>
    <property type="molecule type" value="Genomic_DNA"/>
</dbReference>
<dbReference type="EMBL" id="EU550762">
    <property type="protein sequence ID" value="ACB31524.1"/>
    <property type="molecule type" value="Genomic_DNA"/>
</dbReference>
<dbReference type="EMBL" id="EU550763">
    <property type="protein sequence ID" value="ACB31525.1"/>
    <property type="molecule type" value="Genomic_DNA"/>
</dbReference>
<dbReference type="EMBL" id="EU550764">
    <property type="protein sequence ID" value="ACB31526.1"/>
    <property type="molecule type" value="Genomic_DNA"/>
</dbReference>
<dbReference type="EMBL" id="EU550765">
    <property type="protein sequence ID" value="ACB31527.1"/>
    <property type="molecule type" value="Genomic_DNA"/>
</dbReference>
<dbReference type="EMBL" id="EU550766">
    <property type="protein sequence ID" value="ACB31528.1"/>
    <property type="molecule type" value="Genomic_DNA"/>
</dbReference>
<dbReference type="EMBL" id="EU550767">
    <property type="protein sequence ID" value="ACB31529.1"/>
    <property type="molecule type" value="Genomic_DNA"/>
</dbReference>
<dbReference type="EMBL" id="EU550768">
    <property type="protein sequence ID" value="ACB31530.1"/>
    <property type="molecule type" value="Genomic_DNA"/>
</dbReference>
<dbReference type="EMBL" id="EU550769">
    <property type="protein sequence ID" value="ACB31531.1"/>
    <property type="molecule type" value="Genomic_DNA"/>
</dbReference>
<dbReference type="EMBL" id="EU550770">
    <property type="protein sequence ID" value="ACB31532.1"/>
    <property type="molecule type" value="Genomic_DNA"/>
</dbReference>
<dbReference type="EMBL" id="EU550771">
    <property type="protein sequence ID" value="ACB31533.1"/>
    <property type="molecule type" value="Genomic_DNA"/>
</dbReference>
<dbReference type="EMBL" id="EU550772">
    <property type="protein sequence ID" value="ACB31534.1"/>
    <property type="molecule type" value="Genomic_DNA"/>
</dbReference>
<dbReference type="EMBL" id="EU550773">
    <property type="protein sequence ID" value="ACB31535.1"/>
    <property type="molecule type" value="Genomic_DNA"/>
</dbReference>
<dbReference type="EMBL" id="EU550774">
    <property type="protein sequence ID" value="ACB31536.1"/>
    <property type="molecule type" value="Genomic_DNA"/>
</dbReference>
<dbReference type="EMBL" id="EU550775">
    <property type="protein sequence ID" value="ACB31537.1"/>
    <property type="molecule type" value="Genomic_DNA"/>
</dbReference>
<dbReference type="EMBL" id="EU550776">
    <property type="protein sequence ID" value="ACB31538.1"/>
    <property type="molecule type" value="Genomic_DNA"/>
</dbReference>
<dbReference type="EMBL" id="EU550777">
    <property type="protein sequence ID" value="ACB31539.1"/>
    <property type="molecule type" value="Genomic_DNA"/>
</dbReference>
<dbReference type="PIR" id="T01343">
    <property type="entry name" value="T01343"/>
</dbReference>
<dbReference type="PIR" id="T51237">
    <property type="entry name" value="T51237"/>
</dbReference>
<dbReference type="SMR" id="O81316"/>
<dbReference type="BioGRID" id="13497">
    <property type="interactions" value="17"/>
</dbReference>
<dbReference type="FunCoup" id="O81316">
    <property type="interactions" value="175"/>
</dbReference>
<dbReference type="IntAct" id="O81316">
    <property type="interactions" value="18"/>
</dbReference>
<dbReference type="STRING" id="3702.O81316"/>
<dbReference type="GlyGen" id="O81316">
    <property type="glycosylation" value="1 site"/>
</dbReference>
<dbReference type="PaxDb" id="3702-AT4G00150.1"/>
<dbReference type="ProteomicsDB" id="232912"/>
<dbReference type="EnsemblPlants" id="AT4G00150.1">
    <property type="protein sequence ID" value="AT4G00150.1"/>
    <property type="gene ID" value="AT4G00150"/>
</dbReference>
<dbReference type="GeneID" id="828208"/>
<dbReference type="Gramene" id="AT4G00150.1">
    <property type="protein sequence ID" value="AT4G00150.1"/>
    <property type="gene ID" value="AT4G00150"/>
</dbReference>
<dbReference type="KEGG" id="ath:AT4G00150"/>
<dbReference type="Araport" id="AT4G00150"/>
<dbReference type="TAIR" id="AT4G00150">
    <property type="gene designation" value="HAM3"/>
</dbReference>
<dbReference type="eggNOG" id="ENOG502QQQC">
    <property type="taxonomic scope" value="Eukaryota"/>
</dbReference>
<dbReference type="HOGENOM" id="CLU_013139_1_0_1"/>
<dbReference type="InParanoid" id="O81316"/>
<dbReference type="OMA" id="QWASLMH"/>
<dbReference type="OrthoDB" id="666726at2759"/>
<dbReference type="PhylomeDB" id="O81316"/>
<dbReference type="PRO" id="PR:O81316"/>
<dbReference type="Proteomes" id="UP000006548">
    <property type="component" value="Chromosome 4"/>
</dbReference>
<dbReference type="ExpressionAtlas" id="O81316">
    <property type="expression patterns" value="baseline and differential"/>
</dbReference>
<dbReference type="GO" id="GO:0005634">
    <property type="term" value="C:nucleus"/>
    <property type="evidence" value="ECO:0007669"/>
    <property type="project" value="UniProtKB-SubCell"/>
</dbReference>
<dbReference type="GO" id="GO:0003700">
    <property type="term" value="F:DNA-binding transcription factor activity"/>
    <property type="evidence" value="ECO:0000250"/>
    <property type="project" value="TAIR"/>
</dbReference>
<dbReference type="GO" id="GO:0030154">
    <property type="term" value="P:cell differentiation"/>
    <property type="evidence" value="ECO:0000315"/>
    <property type="project" value="TAIR"/>
</dbReference>
<dbReference type="GO" id="GO:0051301">
    <property type="term" value="P:cell division"/>
    <property type="evidence" value="ECO:0000315"/>
    <property type="project" value="TAIR"/>
</dbReference>
<dbReference type="GO" id="GO:0007623">
    <property type="term" value="P:circadian rhythm"/>
    <property type="evidence" value="ECO:0000270"/>
    <property type="project" value="TAIR"/>
</dbReference>
<dbReference type="GO" id="GO:0006355">
    <property type="term" value="P:regulation of DNA-templated transcription"/>
    <property type="evidence" value="ECO:0000304"/>
    <property type="project" value="TAIR"/>
</dbReference>
<dbReference type="GO" id="GO:0048768">
    <property type="term" value="P:root hair cell tip growth"/>
    <property type="evidence" value="ECO:0000315"/>
    <property type="project" value="TAIR"/>
</dbReference>
<dbReference type="InterPro" id="IPR005202">
    <property type="entry name" value="TF_GRAS"/>
</dbReference>
<dbReference type="PANTHER" id="PTHR31636">
    <property type="entry name" value="OSJNBA0084A10.13 PROTEIN-RELATED"/>
    <property type="match status" value="1"/>
</dbReference>
<dbReference type="Pfam" id="PF03514">
    <property type="entry name" value="GRAS"/>
    <property type="match status" value="1"/>
</dbReference>
<dbReference type="PROSITE" id="PS50985">
    <property type="entry name" value="GRAS"/>
    <property type="match status" value="1"/>
</dbReference>
<feature type="chain" id="PRO_0000350850" description="Scarecrow-like protein 6">
    <location>
        <begin position="1"/>
        <end position="558"/>
    </location>
</feature>
<feature type="domain" description="GRAS" evidence="2">
    <location>
        <begin position="196"/>
        <end position="554"/>
    </location>
</feature>
<feature type="region of interest" description="Disordered" evidence="3">
    <location>
        <begin position="19"/>
        <end position="90"/>
    </location>
</feature>
<feature type="region of interest" description="Leucine repeat I (LRI)" evidence="2">
    <location>
        <begin position="203"/>
        <end position="257"/>
    </location>
</feature>
<feature type="region of interest" description="VHIID" evidence="2">
    <location>
        <begin position="276"/>
        <end position="340"/>
    </location>
</feature>
<feature type="region of interest" description="Leucine repeat II (LRII)" evidence="2">
    <location>
        <begin position="356"/>
        <end position="388"/>
    </location>
</feature>
<feature type="region of interest" description="PFYRE" evidence="2">
    <location>
        <begin position="396"/>
        <end position="479"/>
    </location>
</feature>
<feature type="region of interest" description="SAW" evidence="2">
    <location>
        <begin position="482"/>
        <end position="554"/>
    </location>
</feature>
<feature type="short sequence motif" description="VHIID" evidence="2">
    <location>
        <begin position="307"/>
        <end position="311"/>
    </location>
</feature>
<feature type="compositionally biased region" description="Low complexity" evidence="3">
    <location>
        <begin position="54"/>
        <end position="75"/>
    </location>
</feature>
<accession>O81316</accession>
<accession>B2CV54</accession>
<accession>Q9SYQ4</accession>
<keyword id="KW-0539">Nucleus</keyword>
<keyword id="KW-1185">Reference proteome</keyword>
<keyword id="KW-0804">Transcription</keyword>
<keyword id="KW-0805">Transcription regulation</keyword>
<reference key="1">
    <citation type="journal article" date="1999" name="Nature">
        <title>Sequence and analysis of chromosome 4 of the plant Arabidopsis thaliana.</title>
        <authorList>
            <person name="Mayer K.F.X."/>
            <person name="Schueller C."/>
            <person name="Wambutt R."/>
            <person name="Murphy G."/>
            <person name="Volckaert G."/>
            <person name="Pohl T."/>
            <person name="Duesterhoeft A."/>
            <person name="Stiekema W."/>
            <person name="Entian K.-D."/>
            <person name="Terryn N."/>
            <person name="Harris B."/>
            <person name="Ansorge W."/>
            <person name="Brandt P."/>
            <person name="Grivell L.A."/>
            <person name="Rieger M."/>
            <person name="Weichselgartner M."/>
            <person name="de Simone V."/>
            <person name="Obermaier B."/>
            <person name="Mache R."/>
            <person name="Mueller M."/>
            <person name="Kreis M."/>
            <person name="Delseny M."/>
            <person name="Puigdomenech P."/>
            <person name="Watson M."/>
            <person name="Schmidtheini T."/>
            <person name="Reichert B."/>
            <person name="Portetelle D."/>
            <person name="Perez-Alonso M."/>
            <person name="Boutry M."/>
            <person name="Bancroft I."/>
            <person name="Vos P."/>
            <person name="Hoheisel J."/>
            <person name="Zimmermann W."/>
            <person name="Wedler H."/>
            <person name="Ridley P."/>
            <person name="Langham S.-A."/>
            <person name="McCullagh B."/>
            <person name="Bilham L."/>
            <person name="Robben J."/>
            <person name="van der Schueren J."/>
            <person name="Grymonprez B."/>
            <person name="Chuang Y.-J."/>
            <person name="Vandenbussche F."/>
            <person name="Braeken M."/>
            <person name="Weltjens I."/>
            <person name="Voet M."/>
            <person name="Bastiaens I."/>
            <person name="Aert R."/>
            <person name="Defoor E."/>
            <person name="Weitzenegger T."/>
            <person name="Bothe G."/>
            <person name="Ramsperger U."/>
            <person name="Hilbert H."/>
            <person name="Braun M."/>
            <person name="Holzer E."/>
            <person name="Brandt A."/>
            <person name="Peters S."/>
            <person name="van Staveren M."/>
            <person name="Dirkse W."/>
            <person name="Mooijman P."/>
            <person name="Klein Lankhorst R."/>
            <person name="Rose M."/>
            <person name="Hauf J."/>
            <person name="Koetter P."/>
            <person name="Berneiser S."/>
            <person name="Hempel S."/>
            <person name="Feldpausch M."/>
            <person name="Lamberth S."/>
            <person name="Van den Daele H."/>
            <person name="De Keyser A."/>
            <person name="Buysshaert C."/>
            <person name="Gielen J."/>
            <person name="Villarroel R."/>
            <person name="De Clercq R."/>
            <person name="van Montagu M."/>
            <person name="Rogers J."/>
            <person name="Cronin A."/>
            <person name="Quail M.A."/>
            <person name="Bray-Allen S."/>
            <person name="Clark L."/>
            <person name="Doggett J."/>
            <person name="Hall S."/>
            <person name="Kay M."/>
            <person name="Lennard N."/>
            <person name="McLay K."/>
            <person name="Mayes R."/>
            <person name="Pettett A."/>
            <person name="Rajandream M.A."/>
            <person name="Lyne M."/>
            <person name="Benes V."/>
            <person name="Rechmann S."/>
            <person name="Borkova D."/>
            <person name="Bloecker H."/>
            <person name="Scharfe M."/>
            <person name="Grimm M."/>
            <person name="Loehnert T.-H."/>
            <person name="Dose S."/>
            <person name="de Haan M."/>
            <person name="Maarse A.C."/>
            <person name="Schaefer M."/>
            <person name="Mueller-Auer S."/>
            <person name="Gabel C."/>
            <person name="Fuchs M."/>
            <person name="Fartmann B."/>
            <person name="Granderath K."/>
            <person name="Dauner D."/>
            <person name="Herzl A."/>
            <person name="Neumann S."/>
            <person name="Argiriou A."/>
            <person name="Vitale D."/>
            <person name="Liguori R."/>
            <person name="Piravandi E."/>
            <person name="Massenet O."/>
            <person name="Quigley F."/>
            <person name="Clabauld G."/>
            <person name="Muendlein A."/>
            <person name="Felber R."/>
            <person name="Schnabl S."/>
            <person name="Hiller R."/>
            <person name="Schmidt W."/>
            <person name="Lecharny A."/>
            <person name="Aubourg S."/>
            <person name="Chefdor F."/>
            <person name="Cooke R."/>
            <person name="Berger C."/>
            <person name="Monfort A."/>
            <person name="Casacuberta E."/>
            <person name="Gibbons T."/>
            <person name="Weber N."/>
            <person name="Vandenbol M."/>
            <person name="Bargues M."/>
            <person name="Terol J."/>
            <person name="Torres A."/>
            <person name="Perez-Perez A."/>
            <person name="Purnelle B."/>
            <person name="Bent E."/>
            <person name="Johnson S."/>
            <person name="Tacon D."/>
            <person name="Jesse T."/>
            <person name="Heijnen L."/>
            <person name="Schwarz S."/>
            <person name="Scholler P."/>
            <person name="Heber S."/>
            <person name="Francs P."/>
            <person name="Bielke C."/>
            <person name="Frishman D."/>
            <person name="Haase D."/>
            <person name="Lemcke K."/>
            <person name="Mewes H.-W."/>
            <person name="Stocker S."/>
            <person name="Zaccaria P."/>
            <person name="Bevan M."/>
            <person name="Wilson R.K."/>
            <person name="de la Bastide M."/>
            <person name="Habermann K."/>
            <person name="Parnell L."/>
            <person name="Dedhia N."/>
            <person name="Gnoj L."/>
            <person name="Schutz K."/>
            <person name="Huang E."/>
            <person name="Spiegel L."/>
            <person name="Sekhon M."/>
            <person name="Murray J."/>
            <person name="Sheet P."/>
            <person name="Cordes M."/>
            <person name="Abu-Threideh J."/>
            <person name="Stoneking T."/>
            <person name="Kalicki J."/>
            <person name="Graves T."/>
            <person name="Harmon G."/>
            <person name="Edwards J."/>
            <person name="Latreille P."/>
            <person name="Courtney L."/>
            <person name="Cloud J."/>
            <person name="Abbott A."/>
            <person name="Scott K."/>
            <person name="Johnson D."/>
            <person name="Minx P."/>
            <person name="Bentley D."/>
            <person name="Fulton B."/>
            <person name="Miller N."/>
            <person name="Greco T."/>
            <person name="Kemp K."/>
            <person name="Kramer J."/>
            <person name="Fulton L."/>
            <person name="Mardis E."/>
            <person name="Dante M."/>
            <person name="Pepin K."/>
            <person name="Hillier L.W."/>
            <person name="Nelson J."/>
            <person name="Spieth J."/>
            <person name="Ryan E."/>
            <person name="Andrews S."/>
            <person name="Geisel C."/>
            <person name="Layman D."/>
            <person name="Du H."/>
            <person name="Ali J."/>
            <person name="Berghoff A."/>
            <person name="Jones K."/>
            <person name="Drone K."/>
            <person name="Cotton M."/>
            <person name="Joshu C."/>
            <person name="Antonoiu B."/>
            <person name="Zidanic M."/>
            <person name="Strong C."/>
            <person name="Sun H."/>
            <person name="Lamar B."/>
            <person name="Yordan C."/>
            <person name="Ma P."/>
            <person name="Zhong J."/>
            <person name="Preston R."/>
            <person name="Vil D."/>
            <person name="Shekher M."/>
            <person name="Matero A."/>
            <person name="Shah R."/>
            <person name="Swaby I.K."/>
            <person name="O'Shaughnessy A."/>
            <person name="Rodriguez M."/>
            <person name="Hoffman J."/>
            <person name="Till S."/>
            <person name="Granat S."/>
            <person name="Shohdy N."/>
            <person name="Hasegawa A."/>
            <person name="Hameed A."/>
            <person name="Lodhi M."/>
            <person name="Johnson A."/>
            <person name="Chen E."/>
            <person name="Marra M.A."/>
            <person name="Martienssen R."/>
            <person name="McCombie W.R."/>
        </authorList>
    </citation>
    <scope>NUCLEOTIDE SEQUENCE [LARGE SCALE GENOMIC DNA]</scope>
    <source>
        <strain>cv. Columbia</strain>
    </source>
</reference>
<reference key="2">
    <citation type="journal article" date="2017" name="Plant J.">
        <title>Araport11: a complete reannotation of the Arabidopsis thaliana reference genome.</title>
        <authorList>
            <person name="Cheng C.Y."/>
            <person name="Krishnakumar V."/>
            <person name="Chan A.P."/>
            <person name="Thibaud-Nissen F."/>
            <person name="Schobel S."/>
            <person name="Town C.D."/>
        </authorList>
    </citation>
    <scope>GENOME REANNOTATION</scope>
    <source>
        <strain>cv. Columbia</strain>
    </source>
</reference>
<reference key="3">
    <citation type="journal article" date="2003" name="Science">
        <title>Empirical analysis of transcriptional activity in the Arabidopsis genome.</title>
        <authorList>
            <person name="Yamada K."/>
            <person name="Lim J."/>
            <person name="Dale J.M."/>
            <person name="Chen H."/>
            <person name="Shinn P."/>
            <person name="Palm C.J."/>
            <person name="Southwick A.M."/>
            <person name="Wu H.C."/>
            <person name="Kim C.J."/>
            <person name="Nguyen M."/>
            <person name="Pham P.K."/>
            <person name="Cheuk R.F."/>
            <person name="Karlin-Newmann G."/>
            <person name="Liu S.X."/>
            <person name="Lam B."/>
            <person name="Sakano H."/>
            <person name="Wu T."/>
            <person name="Yu G."/>
            <person name="Miranda M."/>
            <person name="Quach H.L."/>
            <person name="Tripp M."/>
            <person name="Chang C.H."/>
            <person name="Lee J.M."/>
            <person name="Toriumi M.J."/>
            <person name="Chan M.M."/>
            <person name="Tang C.C."/>
            <person name="Onodera C.S."/>
            <person name="Deng J.M."/>
            <person name="Akiyama K."/>
            <person name="Ansari Y."/>
            <person name="Arakawa T."/>
            <person name="Banh J."/>
            <person name="Banno F."/>
            <person name="Bowser L."/>
            <person name="Brooks S.Y."/>
            <person name="Carninci P."/>
            <person name="Chao Q."/>
            <person name="Choy N."/>
            <person name="Enju A."/>
            <person name="Goldsmith A.D."/>
            <person name="Gurjal M."/>
            <person name="Hansen N.F."/>
            <person name="Hayashizaki Y."/>
            <person name="Johnson-Hopson C."/>
            <person name="Hsuan V.W."/>
            <person name="Iida K."/>
            <person name="Karnes M."/>
            <person name="Khan S."/>
            <person name="Koesema E."/>
            <person name="Ishida J."/>
            <person name="Jiang P.X."/>
            <person name="Jones T."/>
            <person name="Kawai J."/>
            <person name="Kamiya A."/>
            <person name="Meyers C."/>
            <person name="Nakajima M."/>
            <person name="Narusaka M."/>
            <person name="Seki M."/>
            <person name="Sakurai T."/>
            <person name="Satou M."/>
            <person name="Tamse R."/>
            <person name="Vaysberg M."/>
            <person name="Wallender E.K."/>
            <person name="Wong C."/>
            <person name="Yamamura Y."/>
            <person name="Yuan S."/>
            <person name="Shinozaki K."/>
            <person name="Davis R.W."/>
            <person name="Theologis A."/>
            <person name="Ecker J.R."/>
        </authorList>
    </citation>
    <scope>NUCLEOTIDE SEQUENCE [LARGE SCALE MRNA]</scope>
    <source>
        <strain>cv. Columbia</strain>
    </source>
</reference>
<reference key="4">
    <citation type="journal article" date="2008" name="Plant Physiol.">
        <title>Sequence variation of microRNAs and their binding sites in Arabidopsis.</title>
        <authorList>
            <person name="Ehrenreich I.M."/>
            <person name="Purugganan M.D."/>
        </authorList>
    </citation>
    <scope>NUCLEOTIDE SEQUENCE [GENOMIC DNA] OF 140-307</scope>
    <source>
        <strain>cv. Ag-0</strain>
        <strain>cv. An-1</strain>
        <strain>cv. Bay-0</strain>
        <strain>cv. Br-0</strain>
        <strain>cv. C24</strain>
        <strain>cv. Ct-0</strain>
        <strain>cv. Cvi-0</strain>
        <strain>cv. Edi-0</strain>
        <strain>cv. Ei-2</strain>
        <strain>cv. Ga-0</strain>
        <strain>cv. Gy-0</strain>
        <strain>cv. Kas-2</strain>
        <strain>cv. Ll-0</strain>
        <strain>cv. Mrk-0</strain>
        <strain>cv. Ms-0</strain>
        <strain>cv. Mt-0</strain>
        <strain>cv. Nd-1</strain>
        <strain>cv. Nok-3</strain>
        <strain>cv. Oy-0</strain>
        <strain>cv. Sorbo</strain>
        <strain>cv. Wassilewskija</strain>
        <strain>cv. Wei-0</strain>
        <strain>cv. Wt-5</strain>
    </source>
</reference>
<reference key="5">
    <citation type="journal article" date="1999" name="Plant J.">
        <title>The GRAS gene family in Arabidopsis: sequence characterization and basic expression analysis of the SCARECROW-LIKE genes.</title>
        <authorList>
            <person name="Pysh L.D."/>
            <person name="Wysocka-Diller J.W."/>
            <person name="Camilleri C."/>
            <person name="Bouchez D."/>
            <person name="Benfey P.N."/>
        </authorList>
    </citation>
    <scope>NUCLEOTIDE SEQUENCE [MRNA] OF 181-558</scope>
    <scope>TISSUE SPECIFICITY</scope>
</reference>
<reference key="6">
    <citation type="journal article" date="2004" name="Plant Mol. Biol.">
        <title>Genome-wide analysis of the GRAS gene family in rice and Arabidopsis.</title>
        <authorList>
            <person name="Tian C."/>
            <person name="Wan P."/>
            <person name="Sun S."/>
            <person name="Li J."/>
            <person name="Chen M."/>
        </authorList>
    </citation>
    <scope>GENE FAMILY</scope>
</reference>
<reference key="7">
    <citation type="journal article" date="2006" name="Mol. Plant Microbe Interact.">
        <title>A root-knot nematode secretory peptide functions as a ligand for a plant transcription factor.</title>
        <authorList>
            <person name="Huang G."/>
            <person name="Dong R."/>
            <person name="Allen R."/>
            <person name="Davis E.L."/>
            <person name="Baum T.J."/>
            <person name="Hussey R.S."/>
        </authorList>
    </citation>
    <scope>INTERACTION WITH PARASITIC NEMATODE PEPTIDE 16D10</scope>
</reference>
<reference key="8">
    <citation type="journal article" date="2008" name="Plant Mol. Biol.">
        <title>Large-scale analysis of the GRAS gene family in Arabidopsis thaliana.</title>
        <authorList>
            <person name="Lee M.-H."/>
            <person name="Kim B."/>
            <person name="Song S.-K."/>
            <person name="Heo J.-O."/>
            <person name="Yu N.-I."/>
            <person name="Lee S.A."/>
            <person name="Kim M."/>
            <person name="Kim D.G."/>
            <person name="Sohn S.O."/>
            <person name="Lim C.E."/>
            <person name="Chang K.S."/>
            <person name="Lee M.M."/>
            <person name="Lim J."/>
        </authorList>
    </citation>
    <scope>GENE FAMILY</scope>
    <scope>SUBCELLULAR LOCATION</scope>
    <scope>TISSUE SPECIFICITY</scope>
</reference>
<proteinExistence type="evidence at protein level"/>